<organism>
    <name type="scientific">Argas monolakensis</name>
    <name type="common">Mono lake bird tick</name>
    <dbReference type="NCBI Taxonomy" id="34602"/>
    <lineage>
        <taxon>Eukaryota</taxon>
        <taxon>Metazoa</taxon>
        <taxon>Ecdysozoa</taxon>
        <taxon>Arthropoda</taxon>
        <taxon>Chelicerata</taxon>
        <taxon>Arachnida</taxon>
        <taxon>Acari</taxon>
        <taxon>Parasitiformes</taxon>
        <taxon>Ixodida</taxon>
        <taxon>Ixodoidea</taxon>
        <taxon>Argasidae</taxon>
        <taxon>Argasinae</taxon>
        <taxon>Argas</taxon>
    </lineage>
</organism>
<feature type="chain" id="PRO_0000323407" description="Large ribosomal subunit protein uL22">
    <location>
        <begin position="1"/>
        <end position="185"/>
    </location>
</feature>
<feature type="region of interest" description="Disordered" evidence="1">
    <location>
        <begin position="157"/>
        <end position="185"/>
    </location>
</feature>
<feature type="compositionally biased region" description="Basic residues" evidence="1">
    <location>
        <begin position="169"/>
        <end position="178"/>
    </location>
</feature>
<evidence type="ECO:0000256" key="1">
    <source>
        <dbReference type="SAM" id="MobiDB-lite"/>
    </source>
</evidence>
<evidence type="ECO:0000303" key="2">
    <source>
    </source>
</evidence>
<evidence type="ECO:0000305" key="3"/>
<evidence type="ECO:0000312" key="4">
    <source>
        <dbReference type="EMBL" id="ABI52651.1"/>
    </source>
</evidence>
<proteinExistence type="evidence at transcript level"/>
<reference evidence="4" key="1">
    <citation type="journal article" date="2008" name="Insect Biochem. Mol. Biol.">
        <title>Comparative sialomics between hard and soft ticks: implications for the evolution of blood-feeding behavior.</title>
        <authorList>
            <person name="Mans B.J."/>
            <person name="Andersen J.F."/>
            <person name="Francischetti I.M."/>
            <person name="Valenzuela J.G."/>
            <person name="Schwan T.G."/>
            <person name="Pham V.M."/>
            <person name="Garfield M.K."/>
            <person name="Hammer C.H."/>
            <person name="Ribeiro J.M.C."/>
        </authorList>
    </citation>
    <scope>NUCLEOTIDE SEQUENCE [LARGE SCALE MRNA]</scope>
    <source>
        <tissue>Salivary gland</tissue>
    </source>
</reference>
<gene>
    <name type="primary">RpL17</name>
</gene>
<gene>
    <name evidence="2" type="ORF">AM-31</name>
</gene>
<keyword id="KW-0687">Ribonucleoprotein</keyword>
<keyword id="KW-0689">Ribosomal protein</keyword>
<accession>Q09JW2</accession>
<comment type="similarity">
    <text evidence="3">Belongs to the universal ribosomal protein uL22 family.</text>
</comment>
<dbReference type="EMBL" id="DQ886734">
    <property type="protein sequence ID" value="ABI52651.1"/>
    <property type="molecule type" value="mRNA"/>
</dbReference>
<dbReference type="SMR" id="Q09JW2"/>
<dbReference type="GO" id="GO:0022625">
    <property type="term" value="C:cytosolic large ribosomal subunit"/>
    <property type="evidence" value="ECO:0007669"/>
    <property type="project" value="TreeGrafter"/>
</dbReference>
<dbReference type="GO" id="GO:0003735">
    <property type="term" value="F:structural constituent of ribosome"/>
    <property type="evidence" value="ECO:0007669"/>
    <property type="project" value="InterPro"/>
</dbReference>
<dbReference type="GO" id="GO:0002181">
    <property type="term" value="P:cytoplasmic translation"/>
    <property type="evidence" value="ECO:0007669"/>
    <property type="project" value="TreeGrafter"/>
</dbReference>
<dbReference type="CDD" id="cd00336">
    <property type="entry name" value="Ribosomal_L22"/>
    <property type="match status" value="1"/>
</dbReference>
<dbReference type="FunFam" id="3.90.470.10:FF:000003">
    <property type="entry name" value="60S ribosomal protein L17"/>
    <property type="match status" value="1"/>
</dbReference>
<dbReference type="Gene3D" id="3.90.470.10">
    <property type="entry name" value="Ribosomal protein L22/L17"/>
    <property type="match status" value="1"/>
</dbReference>
<dbReference type="HAMAP" id="MF_01331_A">
    <property type="entry name" value="Ribosomal_uL22_A"/>
    <property type="match status" value="1"/>
</dbReference>
<dbReference type="InterPro" id="IPR001063">
    <property type="entry name" value="Ribosomal_uL22"/>
</dbReference>
<dbReference type="InterPro" id="IPR018260">
    <property type="entry name" value="Ribosomal_uL22_CS"/>
</dbReference>
<dbReference type="InterPro" id="IPR005721">
    <property type="entry name" value="Ribosomal_uL22_euk/arc"/>
</dbReference>
<dbReference type="InterPro" id="IPR036394">
    <property type="entry name" value="Ribosomal_uL22_sf"/>
</dbReference>
<dbReference type="NCBIfam" id="NF003260">
    <property type="entry name" value="PRK04223.1"/>
    <property type="match status" value="1"/>
</dbReference>
<dbReference type="NCBIfam" id="TIGR01038">
    <property type="entry name" value="uL22_arch_euk"/>
    <property type="match status" value="1"/>
</dbReference>
<dbReference type="PANTHER" id="PTHR11593">
    <property type="entry name" value="60S RIBOSOMAL PROTEIN L17"/>
    <property type="match status" value="1"/>
</dbReference>
<dbReference type="PANTHER" id="PTHR11593:SF10">
    <property type="entry name" value="60S RIBOSOMAL PROTEIN L17"/>
    <property type="match status" value="1"/>
</dbReference>
<dbReference type="Pfam" id="PF00237">
    <property type="entry name" value="Ribosomal_L22"/>
    <property type="match status" value="1"/>
</dbReference>
<dbReference type="SUPFAM" id="SSF54843">
    <property type="entry name" value="Ribosomal protein L22"/>
    <property type="match status" value="1"/>
</dbReference>
<dbReference type="PROSITE" id="PS00464">
    <property type="entry name" value="RIBOSOMAL_L22"/>
    <property type="match status" value="1"/>
</dbReference>
<name>RL17_ARGMO</name>
<protein>
    <recommendedName>
        <fullName evidence="3">Large ribosomal subunit protein uL22</fullName>
    </recommendedName>
    <alternativeName>
        <fullName>60S ribosomal protein L17</fullName>
    </alternativeName>
</protein>
<sequence>MGRYSVEPDNATKSCKARGSNLRVHFKNTRETAQAIKRMSLRRAQRYLKNVIAKKEIVPFRRFNGGVGRKAQAKAWGCTQGRWPKKSAEFLWQLLRNAESNADYKGLDVDRLVIDHIQVNRAPKMRRRTYRAHGRINPYMSSPCHVEVILSEKEQVVAAPTPDEDAPKKKQSKKKMARQKLMQRD</sequence>